<comment type="function">
    <text evidence="1">NDH-1 shuttles electrons from NADH, via FMN and iron-sulfur (Fe-S) centers, to quinones in the respiratory chain. The immediate electron acceptor for the enzyme in this species is believed to be ubiquinone. Couples the redox reaction to proton translocation (for every two electrons transferred, four hydrogen ions are translocated across the cytoplasmic membrane), and thus conserves the redox energy in a proton gradient.</text>
</comment>
<comment type="catalytic activity">
    <reaction evidence="1">
        <text>a quinone + NADH + 5 H(+)(in) = a quinol + NAD(+) + 4 H(+)(out)</text>
        <dbReference type="Rhea" id="RHEA:57888"/>
        <dbReference type="ChEBI" id="CHEBI:15378"/>
        <dbReference type="ChEBI" id="CHEBI:24646"/>
        <dbReference type="ChEBI" id="CHEBI:57540"/>
        <dbReference type="ChEBI" id="CHEBI:57945"/>
        <dbReference type="ChEBI" id="CHEBI:132124"/>
    </reaction>
</comment>
<comment type="subunit">
    <text evidence="1">NDH-1 is composed of 14 different subunits. Subunits NuoB, C, D, E, F, and G constitute the peripheral sector of the complex.</text>
</comment>
<comment type="subcellular location">
    <subcellularLocation>
        <location evidence="1">Cell inner membrane</location>
        <topology evidence="1">Peripheral membrane protein</topology>
        <orientation evidence="1">Cytoplasmic side</orientation>
    </subcellularLocation>
</comment>
<comment type="similarity">
    <text evidence="1">Belongs to the complex I 30 kDa subunit family.</text>
</comment>
<reference key="1">
    <citation type="journal article" date="2007" name="J. Bacteriol.">
        <title>Whole-genome analysis of the methyl tert-butyl ether-degrading beta-proteobacterium Methylibium petroleiphilum PM1.</title>
        <authorList>
            <person name="Kane S.R."/>
            <person name="Chakicherla A.Y."/>
            <person name="Chain P.S.G."/>
            <person name="Schmidt R."/>
            <person name="Shin M.W."/>
            <person name="Legler T.C."/>
            <person name="Scow K.M."/>
            <person name="Larimer F.W."/>
            <person name="Lucas S.M."/>
            <person name="Richardson P.M."/>
            <person name="Hristova K.R."/>
        </authorList>
    </citation>
    <scope>NUCLEOTIDE SEQUENCE [LARGE SCALE GENOMIC DNA]</scope>
    <source>
        <strain>ATCC BAA-1232 / LMG 22953 / PM1</strain>
    </source>
</reference>
<sequence length="203" mass="23090">MDHKIDLLQPALEAALAGKIQALVRDRGELTLTVTAADYLAVCTTLRDHAELKLEQLIDLCGLDYSSYKDGAGSPYTEGPRYCVVLHLLSVSKNWRLRLKVFCADDGLPVVPSVNEIWAAANWFEREAFDLYGIVFEGHADLRRILTDYGFIGHPFRKDFPTTGHVEMRYDAEQRRVIYQPVTIEPREITPRIIREDNYGGLH</sequence>
<evidence type="ECO:0000255" key="1">
    <source>
        <dbReference type="HAMAP-Rule" id="MF_01357"/>
    </source>
</evidence>
<feature type="chain" id="PRO_0000358123" description="NADH-quinone oxidoreductase subunit C">
    <location>
        <begin position="1"/>
        <end position="203"/>
    </location>
</feature>
<gene>
    <name evidence="1" type="primary">nuoC</name>
    <name type="ordered locus">Mpe_A1405</name>
</gene>
<name>NUOC_METPP</name>
<organism>
    <name type="scientific">Methylibium petroleiphilum (strain ATCC BAA-1232 / LMG 22953 / PM1)</name>
    <dbReference type="NCBI Taxonomy" id="420662"/>
    <lineage>
        <taxon>Bacteria</taxon>
        <taxon>Pseudomonadati</taxon>
        <taxon>Pseudomonadota</taxon>
        <taxon>Betaproteobacteria</taxon>
        <taxon>Burkholderiales</taxon>
        <taxon>Sphaerotilaceae</taxon>
        <taxon>Methylibium</taxon>
    </lineage>
</organism>
<accession>A2SFM8</accession>
<keyword id="KW-0997">Cell inner membrane</keyword>
<keyword id="KW-1003">Cell membrane</keyword>
<keyword id="KW-0472">Membrane</keyword>
<keyword id="KW-0520">NAD</keyword>
<keyword id="KW-0874">Quinone</keyword>
<keyword id="KW-1185">Reference proteome</keyword>
<keyword id="KW-1278">Translocase</keyword>
<keyword id="KW-0813">Transport</keyword>
<keyword id="KW-0830">Ubiquinone</keyword>
<dbReference type="EC" id="7.1.1.-" evidence="1"/>
<dbReference type="EMBL" id="CP000555">
    <property type="protein sequence ID" value="ABM94367.1"/>
    <property type="molecule type" value="Genomic_DNA"/>
</dbReference>
<dbReference type="RefSeq" id="WP_011829004.1">
    <property type="nucleotide sequence ID" value="NC_008825.1"/>
</dbReference>
<dbReference type="SMR" id="A2SFM8"/>
<dbReference type="STRING" id="420662.Mpe_A1405"/>
<dbReference type="KEGG" id="mpt:Mpe_A1405"/>
<dbReference type="eggNOG" id="COG0852">
    <property type="taxonomic scope" value="Bacteria"/>
</dbReference>
<dbReference type="HOGENOM" id="CLU_042628_2_1_4"/>
<dbReference type="Proteomes" id="UP000000366">
    <property type="component" value="Chromosome"/>
</dbReference>
<dbReference type="GO" id="GO:0005886">
    <property type="term" value="C:plasma membrane"/>
    <property type="evidence" value="ECO:0007669"/>
    <property type="project" value="UniProtKB-SubCell"/>
</dbReference>
<dbReference type="GO" id="GO:0008137">
    <property type="term" value="F:NADH dehydrogenase (ubiquinone) activity"/>
    <property type="evidence" value="ECO:0007669"/>
    <property type="project" value="InterPro"/>
</dbReference>
<dbReference type="GO" id="GO:0050136">
    <property type="term" value="F:NADH:ubiquinone reductase (non-electrogenic) activity"/>
    <property type="evidence" value="ECO:0007669"/>
    <property type="project" value="UniProtKB-UniRule"/>
</dbReference>
<dbReference type="GO" id="GO:0048038">
    <property type="term" value="F:quinone binding"/>
    <property type="evidence" value="ECO:0007669"/>
    <property type="project" value="UniProtKB-KW"/>
</dbReference>
<dbReference type="Gene3D" id="3.30.460.80">
    <property type="entry name" value="NADH:ubiquinone oxidoreductase, 30kDa subunit"/>
    <property type="match status" value="1"/>
</dbReference>
<dbReference type="HAMAP" id="MF_01357">
    <property type="entry name" value="NDH1_NuoC"/>
    <property type="match status" value="1"/>
</dbReference>
<dbReference type="InterPro" id="IPR010218">
    <property type="entry name" value="NADH_DH_suC"/>
</dbReference>
<dbReference type="InterPro" id="IPR037232">
    <property type="entry name" value="NADH_quin_OxRdtase_su_C/D-like"/>
</dbReference>
<dbReference type="InterPro" id="IPR001268">
    <property type="entry name" value="NADH_UbQ_OxRdtase_30kDa_su"/>
</dbReference>
<dbReference type="InterPro" id="IPR020396">
    <property type="entry name" value="NADH_UbQ_OxRdtase_CS"/>
</dbReference>
<dbReference type="NCBIfam" id="TIGR01961">
    <property type="entry name" value="NuoC_fam"/>
    <property type="match status" value="1"/>
</dbReference>
<dbReference type="NCBIfam" id="NF004730">
    <property type="entry name" value="PRK06074.1-1"/>
    <property type="match status" value="1"/>
</dbReference>
<dbReference type="PANTHER" id="PTHR10884:SF14">
    <property type="entry name" value="NADH DEHYDROGENASE [UBIQUINONE] IRON-SULFUR PROTEIN 3, MITOCHONDRIAL"/>
    <property type="match status" value="1"/>
</dbReference>
<dbReference type="PANTHER" id="PTHR10884">
    <property type="entry name" value="NADH DEHYDROGENASE UBIQUINONE IRON-SULFUR PROTEIN 3"/>
    <property type="match status" value="1"/>
</dbReference>
<dbReference type="Pfam" id="PF00329">
    <property type="entry name" value="Complex1_30kDa"/>
    <property type="match status" value="1"/>
</dbReference>
<dbReference type="SUPFAM" id="SSF143243">
    <property type="entry name" value="Nqo5-like"/>
    <property type="match status" value="1"/>
</dbReference>
<dbReference type="PROSITE" id="PS00542">
    <property type="entry name" value="COMPLEX1_30K"/>
    <property type="match status" value="1"/>
</dbReference>
<protein>
    <recommendedName>
        <fullName evidence="1">NADH-quinone oxidoreductase subunit C</fullName>
        <ecNumber evidence="1">7.1.1.-</ecNumber>
    </recommendedName>
    <alternativeName>
        <fullName evidence="1">NADH dehydrogenase I subunit C</fullName>
    </alternativeName>
    <alternativeName>
        <fullName evidence="1">NDH-1 subunit C</fullName>
    </alternativeName>
</protein>
<proteinExistence type="inferred from homology"/>